<proteinExistence type="inferred from homology"/>
<comment type="function">
    <text evidence="1">Hydrolyzes ribosome-free peptidyl-tRNAs (with 1 or more amino acids incorporated), which drop off the ribosome during protein synthesis, or as a result of ribosome stalling.</text>
</comment>
<comment type="function">
    <text evidence="1">Catalyzes the release of premature peptidyl moieties from peptidyl-tRNA molecules trapped in stalled 50S ribosomal subunits, and thus maintains levels of free tRNAs and 50S ribosomes.</text>
</comment>
<comment type="catalytic activity">
    <reaction evidence="1">
        <text>an N-acyl-L-alpha-aminoacyl-tRNA + H2O = an N-acyl-L-amino acid + a tRNA + H(+)</text>
        <dbReference type="Rhea" id="RHEA:54448"/>
        <dbReference type="Rhea" id="RHEA-COMP:10123"/>
        <dbReference type="Rhea" id="RHEA-COMP:13883"/>
        <dbReference type="ChEBI" id="CHEBI:15377"/>
        <dbReference type="ChEBI" id="CHEBI:15378"/>
        <dbReference type="ChEBI" id="CHEBI:59874"/>
        <dbReference type="ChEBI" id="CHEBI:78442"/>
        <dbReference type="ChEBI" id="CHEBI:138191"/>
        <dbReference type="EC" id="3.1.1.29"/>
    </reaction>
</comment>
<comment type="subunit">
    <text evidence="1">Monomer.</text>
</comment>
<comment type="subcellular location">
    <subcellularLocation>
        <location evidence="1">Cytoplasm</location>
    </subcellularLocation>
</comment>
<comment type="similarity">
    <text evidence="1">Belongs to the PTH family.</text>
</comment>
<sequence>MAIKLIVGLRNPGSAYEQTRHNAGAWLVTALAQRHNSHFKIDKKMQAELTEIDINNHPCRLALPLTFMNHSGQTTRIISQFYKIEPGEILIVHDELDLPVGRIKLKTGGGHGGHNGLRDITAQLGTGEFHRLRIGIGHPGHKDLVHQYVLSRPSMHDRQQIYDAIDRGIAIIPIVLSGDMARAMNQVNA</sequence>
<protein>
    <recommendedName>
        <fullName evidence="1">Peptidyl-tRNA hydrolase</fullName>
        <shortName evidence="1">Pth</shortName>
        <ecNumber evidence="1">3.1.1.29</ecNumber>
    </recommendedName>
</protein>
<organism>
    <name type="scientific">Legionella pneumophila (strain Paris)</name>
    <dbReference type="NCBI Taxonomy" id="297246"/>
    <lineage>
        <taxon>Bacteria</taxon>
        <taxon>Pseudomonadati</taxon>
        <taxon>Pseudomonadota</taxon>
        <taxon>Gammaproteobacteria</taxon>
        <taxon>Legionellales</taxon>
        <taxon>Legionellaceae</taxon>
        <taxon>Legionella</taxon>
    </lineage>
</organism>
<dbReference type="EC" id="3.1.1.29" evidence="1"/>
<dbReference type="EMBL" id="CR628336">
    <property type="protein sequence ID" value="CAH13859.1"/>
    <property type="molecule type" value="Genomic_DNA"/>
</dbReference>
<dbReference type="RefSeq" id="WP_015961730.1">
    <property type="nucleotide sequence ID" value="NC_006368.1"/>
</dbReference>
<dbReference type="SMR" id="Q5X1N7"/>
<dbReference type="KEGG" id="lpp:lpp2706"/>
<dbReference type="LegioList" id="lpp2706"/>
<dbReference type="HOGENOM" id="CLU_062456_3_1_6"/>
<dbReference type="GO" id="GO:0005737">
    <property type="term" value="C:cytoplasm"/>
    <property type="evidence" value="ECO:0007669"/>
    <property type="project" value="UniProtKB-SubCell"/>
</dbReference>
<dbReference type="GO" id="GO:0004045">
    <property type="term" value="F:peptidyl-tRNA hydrolase activity"/>
    <property type="evidence" value="ECO:0007669"/>
    <property type="project" value="UniProtKB-UniRule"/>
</dbReference>
<dbReference type="GO" id="GO:0000049">
    <property type="term" value="F:tRNA binding"/>
    <property type="evidence" value="ECO:0007669"/>
    <property type="project" value="UniProtKB-UniRule"/>
</dbReference>
<dbReference type="GO" id="GO:0006515">
    <property type="term" value="P:protein quality control for misfolded or incompletely synthesized proteins"/>
    <property type="evidence" value="ECO:0007669"/>
    <property type="project" value="UniProtKB-UniRule"/>
</dbReference>
<dbReference type="GO" id="GO:0072344">
    <property type="term" value="P:rescue of stalled ribosome"/>
    <property type="evidence" value="ECO:0007669"/>
    <property type="project" value="UniProtKB-UniRule"/>
</dbReference>
<dbReference type="CDD" id="cd00462">
    <property type="entry name" value="PTH"/>
    <property type="match status" value="1"/>
</dbReference>
<dbReference type="FunFam" id="3.40.50.1470:FF:000001">
    <property type="entry name" value="Peptidyl-tRNA hydrolase"/>
    <property type="match status" value="1"/>
</dbReference>
<dbReference type="Gene3D" id="3.40.50.1470">
    <property type="entry name" value="Peptidyl-tRNA hydrolase"/>
    <property type="match status" value="1"/>
</dbReference>
<dbReference type="HAMAP" id="MF_00083">
    <property type="entry name" value="Pept_tRNA_hydro_bact"/>
    <property type="match status" value="1"/>
</dbReference>
<dbReference type="InterPro" id="IPR001328">
    <property type="entry name" value="Pept_tRNA_hydro"/>
</dbReference>
<dbReference type="InterPro" id="IPR018171">
    <property type="entry name" value="Pept_tRNA_hydro_CS"/>
</dbReference>
<dbReference type="InterPro" id="IPR036416">
    <property type="entry name" value="Pept_tRNA_hydro_sf"/>
</dbReference>
<dbReference type="NCBIfam" id="TIGR00447">
    <property type="entry name" value="pth"/>
    <property type="match status" value="1"/>
</dbReference>
<dbReference type="PANTHER" id="PTHR17224">
    <property type="entry name" value="PEPTIDYL-TRNA HYDROLASE"/>
    <property type="match status" value="1"/>
</dbReference>
<dbReference type="PANTHER" id="PTHR17224:SF1">
    <property type="entry name" value="PEPTIDYL-TRNA HYDROLASE"/>
    <property type="match status" value="1"/>
</dbReference>
<dbReference type="Pfam" id="PF01195">
    <property type="entry name" value="Pept_tRNA_hydro"/>
    <property type="match status" value="1"/>
</dbReference>
<dbReference type="SUPFAM" id="SSF53178">
    <property type="entry name" value="Peptidyl-tRNA hydrolase-like"/>
    <property type="match status" value="1"/>
</dbReference>
<dbReference type="PROSITE" id="PS01196">
    <property type="entry name" value="PEPT_TRNA_HYDROL_2"/>
    <property type="match status" value="1"/>
</dbReference>
<accession>Q5X1N7</accession>
<gene>
    <name evidence="1" type="primary">pth</name>
    <name type="ordered locus">lpp2706</name>
</gene>
<name>PTH_LEGPA</name>
<reference key="1">
    <citation type="journal article" date="2004" name="Nat. Genet.">
        <title>Evidence in the Legionella pneumophila genome for exploitation of host cell functions and high genome plasticity.</title>
        <authorList>
            <person name="Cazalet C."/>
            <person name="Rusniok C."/>
            <person name="Brueggemann H."/>
            <person name="Zidane N."/>
            <person name="Magnier A."/>
            <person name="Ma L."/>
            <person name="Tichit M."/>
            <person name="Jarraud S."/>
            <person name="Bouchier C."/>
            <person name="Vandenesch F."/>
            <person name="Kunst F."/>
            <person name="Etienne J."/>
            <person name="Glaser P."/>
            <person name="Buchrieser C."/>
        </authorList>
    </citation>
    <scope>NUCLEOTIDE SEQUENCE [LARGE SCALE GENOMIC DNA]</scope>
    <source>
        <strain>Paris</strain>
    </source>
</reference>
<feature type="chain" id="PRO_0000187757" description="Peptidyl-tRNA hydrolase">
    <location>
        <begin position="1"/>
        <end position="189"/>
    </location>
</feature>
<feature type="active site" description="Proton acceptor" evidence="1">
    <location>
        <position position="21"/>
    </location>
</feature>
<feature type="binding site" evidence="1">
    <location>
        <position position="16"/>
    </location>
    <ligand>
        <name>tRNA</name>
        <dbReference type="ChEBI" id="CHEBI:17843"/>
    </ligand>
</feature>
<feature type="binding site" evidence="1">
    <location>
        <position position="67"/>
    </location>
    <ligand>
        <name>tRNA</name>
        <dbReference type="ChEBI" id="CHEBI:17843"/>
    </ligand>
</feature>
<feature type="binding site" evidence="1">
    <location>
        <position position="69"/>
    </location>
    <ligand>
        <name>tRNA</name>
        <dbReference type="ChEBI" id="CHEBI:17843"/>
    </ligand>
</feature>
<feature type="binding site" evidence="1">
    <location>
        <position position="115"/>
    </location>
    <ligand>
        <name>tRNA</name>
        <dbReference type="ChEBI" id="CHEBI:17843"/>
    </ligand>
</feature>
<feature type="site" description="Discriminates between blocked and unblocked aminoacyl-tRNA" evidence="1">
    <location>
        <position position="11"/>
    </location>
</feature>
<feature type="site" description="Stabilizes the basic form of H active site to accept a proton" evidence="1">
    <location>
        <position position="94"/>
    </location>
</feature>
<evidence type="ECO:0000255" key="1">
    <source>
        <dbReference type="HAMAP-Rule" id="MF_00083"/>
    </source>
</evidence>
<keyword id="KW-0963">Cytoplasm</keyword>
<keyword id="KW-0378">Hydrolase</keyword>
<keyword id="KW-0694">RNA-binding</keyword>
<keyword id="KW-0820">tRNA-binding</keyword>